<keyword id="KW-0009">Actin-binding</keyword>
<keyword id="KW-0020">Allergen</keyword>
<keyword id="KW-0963">Cytoplasm</keyword>
<keyword id="KW-0206">Cytoskeleton</keyword>
<keyword id="KW-1015">Disulfide bond</keyword>
<keyword id="KW-0597">Phosphoprotein</keyword>
<name>PROAO_OLEEU</name>
<feature type="initiator methionine" description="Removed" evidence="1">
    <location>
        <position position="1"/>
    </location>
</feature>
<feature type="chain" id="PRO_0000425006" description="Profilin-1">
    <location>
        <begin position="2"/>
        <end position="134"/>
    </location>
</feature>
<feature type="short sequence motif" description="Involved in PIP2 interaction">
    <location>
        <begin position="84"/>
        <end position="100"/>
    </location>
</feature>
<feature type="modified residue" description="Phosphothreonine" evidence="1">
    <location>
        <position position="114"/>
    </location>
</feature>
<feature type="disulfide bond" evidence="3">
    <location>
        <begin position="13"/>
        <end position="118"/>
    </location>
</feature>
<organism>
    <name type="scientific">Olea europaea</name>
    <name type="common">Common olive</name>
    <dbReference type="NCBI Taxonomy" id="4146"/>
    <lineage>
        <taxon>Eukaryota</taxon>
        <taxon>Viridiplantae</taxon>
        <taxon>Streptophyta</taxon>
        <taxon>Embryophyta</taxon>
        <taxon>Tracheophyta</taxon>
        <taxon>Spermatophyta</taxon>
        <taxon>Magnoliopsida</taxon>
        <taxon>eudicotyledons</taxon>
        <taxon>Gunneridae</taxon>
        <taxon>Pentapetalae</taxon>
        <taxon>asterids</taxon>
        <taxon>lamiids</taxon>
        <taxon>Lamiales</taxon>
        <taxon>Oleaceae</taxon>
        <taxon>Oleeae</taxon>
        <taxon>Olea</taxon>
    </lineage>
</organism>
<evidence type="ECO:0000250" key="1"/>
<evidence type="ECO:0000305" key="2"/>
<evidence type="ECO:0000305" key="3">
    <source>
    </source>
</evidence>
<protein>
    <recommendedName>
        <fullName>Profilin-1</fullName>
    </recommendedName>
    <alternativeName>
        <fullName>Pollen allergen Ole e 2</fullName>
    </alternativeName>
    <allergenName>Ole e 2</allergenName>
</protein>
<accession>P0DKF6</accession>
<accession>A4GDQ9</accession>
<reference key="1">
    <citation type="journal article" date="2012" name="PLoS ONE">
        <title>Characterization of profilin polymorphism in pollen with a focus on multifunctionality.</title>
        <authorList>
            <person name="Jimenez-Lopez J.C."/>
            <person name="Morales S."/>
            <person name="Castro A.J."/>
            <person name="Volkmann D."/>
            <person name="Rodriguez-Garcia M.I."/>
            <person name="Alche Jde D."/>
        </authorList>
    </citation>
    <scope>NUCLEOTIDE SEQUENCE [MRNA]</scope>
    <scope>POLYMORPHISM</scope>
    <source>
        <strain>cv. Frantoio</strain>
        <tissue>Pollen</tissue>
    </source>
</reference>
<reference key="2">
    <citation type="journal article" date="2013" name="PLoS ONE">
        <title>Analysis of the effects of polymorphism on pollen profilin structural functionality and the generation of conformational, T- and B-cell epitopes.</title>
        <authorList>
            <person name="Jimenez-Lopez J.C."/>
            <person name="Rodriguez-Garcia M.I."/>
            <person name="Alche J.D."/>
        </authorList>
    </citation>
    <scope>3D-STRUCTURE MODELING</scope>
    <scope>DISULFIDE BOND</scope>
</reference>
<proteinExistence type="evidence at protein level"/>
<sequence length="134" mass="14413">MSWQTYVDDHLMCDIEGHEGHRLTAAAIVGHDGSVWAQSATFPQFKPEEMNGIMTDFNEPGHLAPTGLHLGGTKYMVIQGEAGAVIRGKKGSGGITIKKTGQALVCGIYEEPVTPGQCNMVVERLGDYLLEQGL</sequence>
<dbReference type="EMBL" id="DQ317568">
    <property type="protein sequence ID" value="ABC47411.1"/>
    <property type="molecule type" value="mRNA"/>
</dbReference>
<dbReference type="SMR" id="P0DKF6"/>
<dbReference type="GO" id="GO:0005938">
    <property type="term" value="C:cell cortex"/>
    <property type="evidence" value="ECO:0007669"/>
    <property type="project" value="TreeGrafter"/>
</dbReference>
<dbReference type="GO" id="GO:0005856">
    <property type="term" value="C:cytoskeleton"/>
    <property type="evidence" value="ECO:0007669"/>
    <property type="project" value="UniProtKB-SubCell"/>
</dbReference>
<dbReference type="GO" id="GO:0003785">
    <property type="term" value="F:actin monomer binding"/>
    <property type="evidence" value="ECO:0007669"/>
    <property type="project" value="TreeGrafter"/>
</dbReference>
<dbReference type="CDD" id="cd00148">
    <property type="entry name" value="PROF"/>
    <property type="match status" value="1"/>
</dbReference>
<dbReference type="FunFam" id="3.30.450.30:FF:000001">
    <property type="entry name" value="Profilin"/>
    <property type="match status" value="1"/>
</dbReference>
<dbReference type="Gene3D" id="3.30.450.30">
    <property type="entry name" value="Dynein light chain 2a, cytoplasmic"/>
    <property type="match status" value="1"/>
</dbReference>
<dbReference type="InterPro" id="IPR048278">
    <property type="entry name" value="PFN"/>
</dbReference>
<dbReference type="InterPro" id="IPR005455">
    <property type="entry name" value="PFN_euk"/>
</dbReference>
<dbReference type="InterPro" id="IPR036140">
    <property type="entry name" value="PFN_sf"/>
</dbReference>
<dbReference type="InterPro" id="IPR027310">
    <property type="entry name" value="Profilin_CS"/>
</dbReference>
<dbReference type="PANTHER" id="PTHR11604">
    <property type="entry name" value="PROFILIN"/>
    <property type="match status" value="1"/>
</dbReference>
<dbReference type="PANTHER" id="PTHR11604:SF25">
    <property type="entry name" value="PROFILIN-5"/>
    <property type="match status" value="1"/>
</dbReference>
<dbReference type="Pfam" id="PF00235">
    <property type="entry name" value="Profilin"/>
    <property type="match status" value="1"/>
</dbReference>
<dbReference type="PRINTS" id="PR00392">
    <property type="entry name" value="PROFILIN"/>
</dbReference>
<dbReference type="PRINTS" id="PR01640">
    <property type="entry name" value="PROFILINPLNT"/>
</dbReference>
<dbReference type="SMART" id="SM00392">
    <property type="entry name" value="PROF"/>
    <property type="match status" value="1"/>
</dbReference>
<dbReference type="SUPFAM" id="SSF55770">
    <property type="entry name" value="Profilin (actin-binding protein)"/>
    <property type="match status" value="1"/>
</dbReference>
<dbReference type="PROSITE" id="PS00414">
    <property type="entry name" value="PROFILIN"/>
    <property type="match status" value="1"/>
</dbReference>
<comment type="function">
    <text evidence="1">Binds to actin and affects the structure of the cytoskeleton. At high concentrations, profilin prevents the polymerization of actin, whereas it enhances it at low concentrations (By similarity).</text>
</comment>
<comment type="subunit">
    <text evidence="1">Occurs in many kinds of cells as a complex with monomeric actin in a 1:1 ratio.</text>
</comment>
<comment type="subcellular location">
    <subcellularLocation>
        <location evidence="1">Cytoplasm</location>
        <location evidence="1">Cytoskeleton</location>
    </subcellularLocation>
</comment>
<comment type="PTM">
    <text evidence="1">Phosphorylated by MAP kinases.</text>
</comment>
<comment type="polymorphism">
    <text>Several isoforms of the allergen exist due to polymorphism.</text>
</comment>
<comment type="allergen">
    <text>Causes an allergic reaction in human.</text>
</comment>
<comment type="miscellaneous">
    <text evidence="3">The variability of the residues taking part of IgE-binding epitopes might be responsible of the difference in cross-reactivity among olive pollen cultivars, and between distantly related pollen species, leading to a variable range of allergy reactions among atopic patients.</text>
</comment>
<comment type="similarity">
    <text evidence="2">Belongs to the profilin family.</text>
</comment>